<feature type="signal peptide" evidence="2">
    <location>
        <begin position="1"/>
        <end position="16"/>
    </location>
</feature>
<feature type="chain" id="PRO_0000032527" description="Alaserpin">
    <location>
        <begin position="17"/>
        <end position="392"/>
    </location>
</feature>
<feature type="site" description="Reactive bond" evidence="1">
    <location>
        <begin position="359"/>
        <end position="360"/>
    </location>
</feature>
<feature type="glycosylation site" description="N-linked (GlcNAc...) asparagine" evidence="2">
    <location>
        <position position="85"/>
    </location>
</feature>
<feature type="helix" evidence="5">
    <location>
        <begin position="19"/>
        <end position="22"/>
    </location>
</feature>
<feature type="helix" evidence="5">
    <location>
        <begin position="25"/>
        <end position="41"/>
    </location>
</feature>
<feature type="strand" evidence="5">
    <location>
        <begin position="49"/>
        <end position="51"/>
    </location>
</feature>
<feature type="helix" evidence="5">
    <location>
        <begin position="54"/>
        <end position="56"/>
    </location>
</feature>
<feature type="helix" evidence="5">
    <location>
        <begin position="57"/>
        <end position="63"/>
    </location>
</feature>
<feature type="turn" evidence="5">
    <location>
        <begin position="64"/>
        <end position="66"/>
    </location>
</feature>
<feature type="helix" evidence="5">
    <location>
        <begin position="70"/>
        <end position="78"/>
    </location>
</feature>
<feature type="helix" evidence="5">
    <location>
        <begin position="86"/>
        <end position="94"/>
    </location>
</feature>
<feature type="strand" evidence="5">
    <location>
        <begin position="102"/>
        <end position="104"/>
    </location>
</feature>
<feature type="strand" evidence="5">
    <location>
        <begin position="107"/>
        <end position="117"/>
    </location>
</feature>
<feature type="helix" evidence="5">
    <location>
        <begin position="123"/>
        <end position="125"/>
    </location>
</feature>
<feature type="turn" evidence="5">
    <location>
        <begin position="127"/>
        <end position="129"/>
    </location>
</feature>
<feature type="strand" evidence="5">
    <location>
        <begin position="130"/>
        <end position="132"/>
    </location>
</feature>
<feature type="strand" evidence="5">
    <location>
        <begin position="136"/>
        <end position="139"/>
    </location>
</feature>
<feature type="helix" evidence="5">
    <location>
        <begin position="144"/>
        <end position="158"/>
    </location>
</feature>
<feature type="turn" evidence="5">
    <location>
        <begin position="159"/>
        <end position="161"/>
    </location>
</feature>
<feature type="helix" evidence="5">
    <location>
        <begin position="169"/>
        <end position="171"/>
    </location>
</feature>
<feature type="strand" evidence="5">
    <location>
        <begin position="178"/>
        <end position="188"/>
    </location>
</feature>
<feature type="strand" evidence="5">
    <location>
        <begin position="190"/>
        <end position="192"/>
    </location>
</feature>
<feature type="helix" evidence="5">
    <location>
        <begin position="196"/>
        <end position="198"/>
    </location>
</feature>
<feature type="strand" evidence="5">
    <location>
        <begin position="200"/>
        <end position="204"/>
    </location>
</feature>
<feature type="strand" evidence="5">
    <location>
        <begin position="206"/>
        <end position="209"/>
    </location>
</feature>
<feature type="strand" evidence="5">
    <location>
        <begin position="212"/>
        <end position="228"/>
    </location>
</feature>
<feature type="turn" evidence="5">
    <location>
        <begin position="229"/>
        <end position="232"/>
    </location>
</feature>
<feature type="strand" evidence="5">
    <location>
        <begin position="233"/>
        <end position="240"/>
    </location>
</feature>
<feature type="helix" evidence="5">
    <location>
        <begin position="241"/>
        <end position="243"/>
    </location>
</feature>
<feature type="strand" evidence="5">
    <location>
        <begin position="244"/>
        <end position="254"/>
    </location>
</feature>
<feature type="turn" evidence="5">
    <location>
        <begin position="255"/>
        <end position="257"/>
    </location>
</feature>
<feature type="helix" evidence="5">
    <location>
        <begin position="258"/>
        <end position="264"/>
    </location>
</feature>
<feature type="turn" evidence="5">
    <location>
        <begin position="268"/>
        <end position="276"/>
    </location>
</feature>
<feature type="strand" evidence="5">
    <location>
        <begin position="279"/>
        <end position="288"/>
    </location>
</feature>
<feature type="strand" evidence="5">
    <location>
        <begin position="290"/>
        <end position="297"/>
    </location>
</feature>
<feature type="helix" evidence="5">
    <location>
        <begin position="298"/>
        <end position="303"/>
    </location>
</feature>
<feature type="turn" evidence="5">
    <location>
        <begin position="304"/>
        <end position="306"/>
    </location>
</feature>
<feature type="turn" evidence="5">
    <location>
        <begin position="313"/>
        <end position="315"/>
    </location>
</feature>
<feature type="turn" evidence="5">
    <location>
        <begin position="319"/>
        <end position="321"/>
    </location>
</feature>
<feature type="strand" evidence="5">
    <location>
        <begin position="322"/>
        <end position="324"/>
    </location>
</feature>
<feature type="strand" evidence="5">
    <location>
        <begin position="331"/>
        <end position="341"/>
    </location>
</feature>
<feature type="strand" evidence="5">
    <location>
        <begin position="345"/>
        <end position="347"/>
    </location>
</feature>
<feature type="strand" evidence="5">
    <location>
        <begin position="349"/>
        <end position="351"/>
    </location>
</feature>
<feature type="strand" evidence="5">
    <location>
        <begin position="354"/>
        <end position="359"/>
    </location>
</feature>
<feature type="strand" evidence="5">
    <location>
        <begin position="366"/>
        <end position="368"/>
    </location>
</feature>
<feature type="strand" evidence="5">
    <location>
        <begin position="373"/>
        <end position="390"/>
    </location>
</feature>
<organism>
    <name type="scientific">Manduca sexta</name>
    <name type="common">Tobacco hawkmoth</name>
    <name type="synonym">Tobacco hornworm</name>
    <dbReference type="NCBI Taxonomy" id="7130"/>
    <lineage>
        <taxon>Eukaryota</taxon>
        <taxon>Metazoa</taxon>
        <taxon>Ecdysozoa</taxon>
        <taxon>Arthropoda</taxon>
        <taxon>Hexapoda</taxon>
        <taxon>Insecta</taxon>
        <taxon>Pterygota</taxon>
        <taxon>Neoptera</taxon>
        <taxon>Endopterygota</taxon>
        <taxon>Lepidoptera</taxon>
        <taxon>Glossata</taxon>
        <taxon>Ditrysia</taxon>
        <taxon>Bombycoidea</taxon>
        <taxon>Sphingidae</taxon>
        <taxon>Sphinginae</taxon>
        <taxon>Sphingini</taxon>
        <taxon>Manduca</taxon>
    </lineage>
</organism>
<proteinExistence type="evidence at protein level"/>
<dbReference type="EMBL" id="M23438">
    <property type="protein sequence ID" value="AAA29327.1"/>
    <property type="molecule type" value="mRNA"/>
</dbReference>
<dbReference type="EMBL" id="L20792">
    <property type="protein sequence ID" value="AAA29329.1"/>
    <property type="molecule type" value="mRNA"/>
</dbReference>
<dbReference type="EMBL" id="U58361">
    <property type="protein sequence ID" value="AAC47343.1"/>
    <property type="molecule type" value="Genomic_DNA"/>
</dbReference>
<dbReference type="PIR" id="A38829">
    <property type="entry name" value="A38829"/>
</dbReference>
<dbReference type="PDB" id="1K9O">
    <property type="method" value="X-ray"/>
    <property type="resolution" value="2.30 A"/>
    <property type="chains" value="I=15-392"/>
</dbReference>
<dbReference type="PDB" id="1SEK">
    <property type="method" value="X-ray"/>
    <property type="resolution" value="2.10 A"/>
    <property type="chains" value="A=15-354"/>
</dbReference>
<dbReference type="PDBsum" id="1K9O"/>
<dbReference type="PDBsum" id="1SEK"/>
<dbReference type="SMR" id="P14754"/>
<dbReference type="IntAct" id="P14754">
    <property type="interactions" value="1"/>
</dbReference>
<dbReference type="MINT" id="P14754"/>
<dbReference type="MEROPS" id="I04.031"/>
<dbReference type="OrthoDB" id="671595at2759"/>
<dbReference type="EvolutionaryTrace" id="P14754"/>
<dbReference type="GO" id="GO:0005615">
    <property type="term" value="C:extracellular space"/>
    <property type="evidence" value="ECO:0007669"/>
    <property type="project" value="InterPro"/>
</dbReference>
<dbReference type="GO" id="GO:0004867">
    <property type="term" value="F:serine-type endopeptidase inhibitor activity"/>
    <property type="evidence" value="ECO:0007669"/>
    <property type="project" value="UniProtKB-KW"/>
</dbReference>
<dbReference type="GO" id="GO:0009617">
    <property type="term" value="P:response to bacterium"/>
    <property type="evidence" value="ECO:0000270"/>
    <property type="project" value="UniProtKB"/>
</dbReference>
<dbReference type="CDD" id="cd19579">
    <property type="entry name" value="serpin1K-like"/>
    <property type="match status" value="1"/>
</dbReference>
<dbReference type="FunFam" id="3.30.497.10:FF:000006">
    <property type="entry name" value="Plasminogen activator inhibitor 1"/>
    <property type="match status" value="1"/>
</dbReference>
<dbReference type="Gene3D" id="2.30.39.10">
    <property type="entry name" value="Alpha-1-antitrypsin, domain 1"/>
    <property type="match status" value="1"/>
</dbReference>
<dbReference type="Gene3D" id="3.30.497.10">
    <property type="entry name" value="Antithrombin, subunit I, domain 2"/>
    <property type="match status" value="1"/>
</dbReference>
<dbReference type="InterPro" id="IPR023795">
    <property type="entry name" value="Serpin_CS"/>
</dbReference>
<dbReference type="InterPro" id="IPR023796">
    <property type="entry name" value="Serpin_dom"/>
</dbReference>
<dbReference type="InterPro" id="IPR000215">
    <property type="entry name" value="Serpin_fam"/>
</dbReference>
<dbReference type="InterPro" id="IPR036186">
    <property type="entry name" value="Serpin_sf"/>
</dbReference>
<dbReference type="InterPro" id="IPR042178">
    <property type="entry name" value="Serpin_sf_1"/>
</dbReference>
<dbReference type="InterPro" id="IPR042185">
    <property type="entry name" value="Serpin_sf_2"/>
</dbReference>
<dbReference type="PANTHER" id="PTHR11461:SF211">
    <property type="entry name" value="GH10112P-RELATED"/>
    <property type="match status" value="1"/>
</dbReference>
<dbReference type="PANTHER" id="PTHR11461">
    <property type="entry name" value="SERINE PROTEASE INHIBITOR, SERPIN"/>
    <property type="match status" value="1"/>
</dbReference>
<dbReference type="Pfam" id="PF00079">
    <property type="entry name" value="Serpin"/>
    <property type="match status" value="1"/>
</dbReference>
<dbReference type="SMART" id="SM00093">
    <property type="entry name" value="SERPIN"/>
    <property type="match status" value="1"/>
</dbReference>
<dbReference type="SUPFAM" id="SSF56574">
    <property type="entry name" value="Serpins"/>
    <property type="match status" value="1"/>
</dbReference>
<dbReference type="PROSITE" id="PS00284">
    <property type="entry name" value="SERPIN"/>
    <property type="match status" value="1"/>
</dbReference>
<accession>P14754</accession>
<reference key="1">
    <citation type="journal article" date="1989" name="J. Biol. Chem.">
        <title>Primary structure of a member of the serpin superfamily of proteinase inhibitors from an insect, Manduca sexta.</title>
        <authorList>
            <person name="Kanost M.R."/>
            <person name="Prasad S.V."/>
            <person name="Wells M.A."/>
        </authorList>
    </citation>
    <scope>NUCLEOTIDE SEQUENCE [MRNA]</scope>
    <source>
        <tissue>Hemolymph</tissue>
    </source>
</reference>
<reference key="2">
    <citation type="journal article" date="1994" name="J. Biol. Chem.">
        <title>Mutually exclusive exon use and reactive center diversity in insect serpins.</title>
        <authorList>
            <person name="Jiang H."/>
            <person name="Kanost M.R."/>
        </authorList>
    </citation>
    <scope>NUCLEOTIDE SEQUENCE [MRNA]</scope>
    <source>
        <tissue>Hemocyte</tissue>
    </source>
</reference>
<reference key="3">
    <citation type="journal article" date="1996" name="J. Biol. Chem.">
        <title>Organization of serpin gene-1 from Manduca sexta. Evolution of a family of alternate exons encoding the reactive site loop.</title>
        <authorList>
            <person name="Jiang H."/>
            <person name="Wang Y."/>
            <person name="Huang Y."/>
            <person name="Mulnix A.B."/>
            <person name="Kadel J."/>
            <person name="Cole K."/>
            <person name="Kanost M.R."/>
        </authorList>
    </citation>
    <scope>NUCLEOTIDE SEQUENCE [GENOMIC DNA]</scope>
</reference>
<reference key="4">
    <citation type="journal article" date="2004" name="Insect Mol. Biol.">
        <title>Bacterial challenge stimulates innate immune responses in extra-embryonic tissues of tobacco hornworm eggs.</title>
        <authorList>
            <person name="Gorman M.J."/>
            <person name="Kankanala P."/>
            <person name="Kanost M.R."/>
        </authorList>
    </citation>
    <scope>DEVELOPMENTAL STAGE</scope>
    <scope>INDUCTION</scope>
</reference>
<evidence type="ECO:0000250" key="1"/>
<evidence type="ECO:0000255" key="2"/>
<evidence type="ECO:0000269" key="3">
    <source>
    </source>
</evidence>
<evidence type="ECO:0000305" key="4"/>
<evidence type="ECO:0007829" key="5">
    <source>
        <dbReference type="PDB" id="1K9O"/>
    </source>
</evidence>
<sequence>MKIIMCIFGLAALAMAGETDLQKILRESNDQFTAQMFSEVVKANPGQNVVLSAFSVLPPLGQLALASVGESHDELLRALALPNDNVTKDVFADLNRGVRAVKGVDLKMASKIYVAKGLELNDDFAAVSRDVFGSEVQNVDFVKSVEAAGAINKWVEDQTNNRIKNLVDPDALDETTRSVLVNAIYFKGSWKDKFVKERTMDRDFHVSKDKTIKVPTMIGKKDVRYADVPELDAKMIEMSYEGDQASMIIILPNQVDGITALEQKLKDPKALSRAEERLYNTEVEIYLPKFKIETTTDLKEVLSNMNIKKLFTPGAARLENLLKTKESLYVDAAIQKAFIEVNEEGAEAAAANAFGIVPASLILYPEVHIDRPFYFELKIDGIPMFNGKVIEP</sequence>
<comment type="function">
    <text>Inhibits elastase.</text>
</comment>
<comment type="subcellular location">
    <subcellularLocation>
        <location>Secreted</location>
        <location>Extracellular space</location>
    </subcellularLocation>
</comment>
<comment type="alternative products">
    <event type="alternative splicing"/>
    <isoform>
        <id>P14754-1</id>
        <name>1</name>
        <sequence type="displayed"/>
    </isoform>
    <text>A number of isoforms are produced.</text>
</comment>
<comment type="tissue specificity">
    <text>Hemolymph.</text>
</comment>
<comment type="developmental stage">
    <text evidence="3">Expressed in naive 2 hour (precellular blastoderm stage) and 24 hour (predorsal closure stage) eggs.</text>
</comment>
<comment type="induction">
    <text evidence="3">By bacterial infection.</text>
</comment>
<comment type="similarity">
    <text evidence="4">Belongs to the serpin family.</text>
</comment>
<name>SERA_MANSE</name>
<protein>
    <recommendedName>
        <fullName>Alaserpin</fullName>
    </recommendedName>
    <alternativeName>
        <fullName>Serpin-1</fullName>
    </alternativeName>
</protein>
<keyword id="KW-0002">3D-structure</keyword>
<keyword id="KW-0025">Alternative splicing</keyword>
<keyword id="KW-0325">Glycoprotein</keyword>
<keyword id="KW-0646">Protease inhibitor</keyword>
<keyword id="KW-0964">Secreted</keyword>
<keyword id="KW-0722">Serine protease inhibitor</keyword>
<keyword id="KW-0732">Signal</keyword>